<comment type="function">
    <text evidence="1">Catalyzes the interconversion of L-alanine and D-alanine. May also act on other amino acids.</text>
</comment>
<comment type="catalytic activity">
    <reaction evidence="1">
        <text>L-alanine = D-alanine</text>
        <dbReference type="Rhea" id="RHEA:20249"/>
        <dbReference type="ChEBI" id="CHEBI:57416"/>
        <dbReference type="ChEBI" id="CHEBI:57972"/>
        <dbReference type="EC" id="5.1.1.1"/>
    </reaction>
</comment>
<comment type="cofactor">
    <cofactor evidence="1">
        <name>pyridoxal 5'-phosphate</name>
        <dbReference type="ChEBI" id="CHEBI:597326"/>
    </cofactor>
</comment>
<comment type="pathway">
    <text evidence="1">Amino-acid biosynthesis; D-alanine biosynthesis; D-alanine from L-alanine: step 1/1.</text>
</comment>
<comment type="similarity">
    <text evidence="1">Belongs to the alanine racemase family.</text>
</comment>
<protein>
    <recommendedName>
        <fullName evidence="1">Alanine racemase</fullName>
        <ecNumber evidence="1">5.1.1.1</ecNumber>
    </recommendedName>
</protein>
<reference key="1">
    <citation type="submission" date="2006-11" db="EMBL/GenBank/DDBJ databases">
        <title>Identification and characterization of a new conjugation/ type IVA secretion system (trb/tra) of L. pneumophila Corby localized on a mobile genomic island.</title>
        <authorList>
            <person name="Gloeckner G."/>
            <person name="Albert-Weissenberger C."/>
            <person name="Weinmann E."/>
            <person name="Jacobi S."/>
            <person name="Schunder E."/>
            <person name="Steinert M."/>
            <person name="Buchrieser C."/>
            <person name="Hacker J."/>
            <person name="Heuner K."/>
        </authorList>
    </citation>
    <scope>NUCLEOTIDE SEQUENCE [LARGE SCALE GENOMIC DNA]</scope>
    <source>
        <strain>Corby</strain>
    </source>
</reference>
<name>ALR_LEGPC</name>
<feature type="chain" id="PRO_1000138609" description="Alanine racemase">
    <location>
        <begin position="1"/>
        <end position="357"/>
    </location>
</feature>
<feature type="active site" description="Proton acceptor; specific for D-alanine" evidence="1">
    <location>
        <position position="35"/>
    </location>
</feature>
<feature type="active site" description="Proton acceptor; specific for L-alanine" evidence="1">
    <location>
        <position position="256"/>
    </location>
</feature>
<feature type="binding site" evidence="1">
    <location>
        <position position="131"/>
    </location>
    <ligand>
        <name>substrate</name>
    </ligand>
</feature>
<feature type="binding site" evidence="1">
    <location>
        <position position="304"/>
    </location>
    <ligand>
        <name>substrate</name>
    </ligand>
</feature>
<feature type="modified residue" description="N6-(pyridoxal phosphate)lysine" evidence="1">
    <location>
        <position position="35"/>
    </location>
</feature>
<organism>
    <name type="scientific">Legionella pneumophila (strain Corby)</name>
    <dbReference type="NCBI Taxonomy" id="400673"/>
    <lineage>
        <taxon>Bacteria</taxon>
        <taxon>Pseudomonadati</taxon>
        <taxon>Pseudomonadota</taxon>
        <taxon>Gammaproteobacteria</taxon>
        <taxon>Legionellales</taxon>
        <taxon>Legionellaceae</taxon>
        <taxon>Legionella</taxon>
    </lineage>
</organism>
<evidence type="ECO:0000255" key="1">
    <source>
        <dbReference type="HAMAP-Rule" id="MF_01201"/>
    </source>
</evidence>
<sequence length="357" mass="39278">MSRPTRLVIEPSALLHNLSQIKHLAPGKKVIAMVKANAYGCGVREVAPVLDGRIEAFGVACLEEALAIRALGVETPCILFQGVFSSDELSVAVENDFACVLHHAQQLEWLIKTPLPYPIKVWVKVNTGMHRLGFKIHELQKVMGALQTCTWVDKSIGLMTHLACADEPHRPENQQQISLFQEISIPGFRQRSIANSAAIISFPDSQADVVRPGIMLYGVSPFANQNAHDLGLIPVMRFMSAISAIHDNPSFAQVGYGGTWKSDKPSRIGVVAAGYGDGYPRHISEKTPVWVRGREVSIVGRVSMDMLTIDLTEHPDVEIGDEVELWGTHVLVERIAKSAGTVGYELLCQISERVRYK</sequence>
<accession>A5IGG9</accession>
<keyword id="KW-0413">Isomerase</keyword>
<keyword id="KW-0663">Pyridoxal phosphate</keyword>
<dbReference type="EC" id="5.1.1.1" evidence="1"/>
<dbReference type="EMBL" id="CP000675">
    <property type="protein sequence ID" value="ABQ56469.1"/>
    <property type="molecule type" value="Genomic_DNA"/>
</dbReference>
<dbReference type="RefSeq" id="WP_011945880.1">
    <property type="nucleotide sequence ID" value="NC_009494.2"/>
</dbReference>
<dbReference type="SMR" id="A5IGG9"/>
<dbReference type="KEGG" id="lpc:LPC_2554"/>
<dbReference type="HOGENOM" id="CLU_028393_1_0_6"/>
<dbReference type="UniPathway" id="UPA00042">
    <property type="reaction ID" value="UER00497"/>
</dbReference>
<dbReference type="GO" id="GO:0005829">
    <property type="term" value="C:cytosol"/>
    <property type="evidence" value="ECO:0007669"/>
    <property type="project" value="TreeGrafter"/>
</dbReference>
<dbReference type="GO" id="GO:0008784">
    <property type="term" value="F:alanine racemase activity"/>
    <property type="evidence" value="ECO:0007669"/>
    <property type="project" value="UniProtKB-UniRule"/>
</dbReference>
<dbReference type="GO" id="GO:0030170">
    <property type="term" value="F:pyridoxal phosphate binding"/>
    <property type="evidence" value="ECO:0007669"/>
    <property type="project" value="UniProtKB-UniRule"/>
</dbReference>
<dbReference type="GO" id="GO:0030632">
    <property type="term" value="P:D-alanine biosynthetic process"/>
    <property type="evidence" value="ECO:0007669"/>
    <property type="project" value="UniProtKB-UniRule"/>
</dbReference>
<dbReference type="CDD" id="cd06827">
    <property type="entry name" value="PLPDE_III_AR_proteobact"/>
    <property type="match status" value="1"/>
</dbReference>
<dbReference type="FunFam" id="3.20.20.10:FF:000002">
    <property type="entry name" value="Alanine racemase"/>
    <property type="match status" value="1"/>
</dbReference>
<dbReference type="Gene3D" id="3.20.20.10">
    <property type="entry name" value="Alanine racemase"/>
    <property type="match status" value="1"/>
</dbReference>
<dbReference type="Gene3D" id="2.40.37.10">
    <property type="entry name" value="Lyase, Ornithine Decarboxylase, Chain A, domain 1"/>
    <property type="match status" value="1"/>
</dbReference>
<dbReference type="HAMAP" id="MF_01201">
    <property type="entry name" value="Ala_racemase"/>
    <property type="match status" value="1"/>
</dbReference>
<dbReference type="InterPro" id="IPR000821">
    <property type="entry name" value="Ala_racemase"/>
</dbReference>
<dbReference type="InterPro" id="IPR009006">
    <property type="entry name" value="Ala_racemase/Decarboxylase_C"/>
</dbReference>
<dbReference type="InterPro" id="IPR011079">
    <property type="entry name" value="Ala_racemase_C"/>
</dbReference>
<dbReference type="InterPro" id="IPR001608">
    <property type="entry name" value="Ala_racemase_N"/>
</dbReference>
<dbReference type="InterPro" id="IPR029066">
    <property type="entry name" value="PLP-binding_barrel"/>
</dbReference>
<dbReference type="NCBIfam" id="TIGR00492">
    <property type="entry name" value="alr"/>
    <property type="match status" value="1"/>
</dbReference>
<dbReference type="PANTHER" id="PTHR30511">
    <property type="entry name" value="ALANINE RACEMASE"/>
    <property type="match status" value="1"/>
</dbReference>
<dbReference type="PANTHER" id="PTHR30511:SF0">
    <property type="entry name" value="ALANINE RACEMASE, CATABOLIC-RELATED"/>
    <property type="match status" value="1"/>
</dbReference>
<dbReference type="Pfam" id="PF00842">
    <property type="entry name" value="Ala_racemase_C"/>
    <property type="match status" value="1"/>
</dbReference>
<dbReference type="Pfam" id="PF01168">
    <property type="entry name" value="Ala_racemase_N"/>
    <property type="match status" value="1"/>
</dbReference>
<dbReference type="PRINTS" id="PR00992">
    <property type="entry name" value="ALARACEMASE"/>
</dbReference>
<dbReference type="SMART" id="SM01005">
    <property type="entry name" value="Ala_racemase_C"/>
    <property type="match status" value="1"/>
</dbReference>
<dbReference type="SUPFAM" id="SSF50621">
    <property type="entry name" value="Alanine racemase C-terminal domain-like"/>
    <property type="match status" value="1"/>
</dbReference>
<dbReference type="SUPFAM" id="SSF51419">
    <property type="entry name" value="PLP-binding barrel"/>
    <property type="match status" value="1"/>
</dbReference>
<proteinExistence type="inferred from homology"/>
<gene>
    <name type="primary">alr</name>
    <name type="ordered locus">LPC_2554</name>
</gene>